<proteinExistence type="inferred from homology"/>
<name>CLPP_STRPD</name>
<feature type="chain" id="PRO_0000252854" description="ATP-dependent Clp protease proteolytic subunit">
    <location>
        <begin position="1"/>
        <end position="196"/>
    </location>
</feature>
<feature type="active site" description="Nucleophile" evidence="1">
    <location>
        <position position="96"/>
    </location>
</feature>
<feature type="active site" evidence="1">
    <location>
        <position position="121"/>
    </location>
</feature>
<protein>
    <recommendedName>
        <fullName evidence="1">ATP-dependent Clp protease proteolytic subunit</fullName>
        <ecNumber evidence="1">3.4.21.92</ecNumber>
    </recommendedName>
    <alternativeName>
        <fullName evidence="1">Endopeptidase Clp</fullName>
    </alternativeName>
</protein>
<evidence type="ECO:0000255" key="1">
    <source>
        <dbReference type="HAMAP-Rule" id="MF_00444"/>
    </source>
</evidence>
<dbReference type="EC" id="3.4.21.92" evidence="1"/>
<dbReference type="EMBL" id="CP000260">
    <property type="protein sequence ID" value="ABF33389.1"/>
    <property type="molecule type" value="Genomic_DNA"/>
</dbReference>
<dbReference type="RefSeq" id="WP_002985850.1">
    <property type="nucleotide sequence ID" value="NZ_CVUH01000002.1"/>
</dbReference>
<dbReference type="SMR" id="Q1JID4"/>
<dbReference type="MEROPS" id="S14.001"/>
<dbReference type="KEGG" id="sph:MGAS10270_Spy0324"/>
<dbReference type="HOGENOM" id="CLU_058707_3_2_9"/>
<dbReference type="Proteomes" id="UP000002436">
    <property type="component" value="Chromosome"/>
</dbReference>
<dbReference type="GO" id="GO:0005737">
    <property type="term" value="C:cytoplasm"/>
    <property type="evidence" value="ECO:0007669"/>
    <property type="project" value="UniProtKB-SubCell"/>
</dbReference>
<dbReference type="GO" id="GO:0009368">
    <property type="term" value="C:endopeptidase Clp complex"/>
    <property type="evidence" value="ECO:0007669"/>
    <property type="project" value="TreeGrafter"/>
</dbReference>
<dbReference type="GO" id="GO:0004176">
    <property type="term" value="F:ATP-dependent peptidase activity"/>
    <property type="evidence" value="ECO:0007669"/>
    <property type="project" value="InterPro"/>
</dbReference>
<dbReference type="GO" id="GO:0051117">
    <property type="term" value="F:ATPase binding"/>
    <property type="evidence" value="ECO:0007669"/>
    <property type="project" value="TreeGrafter"/>
</dbReference>
<dbReference type="GO" id="GO:0004252">
    <property type="term" value="F:serine-type endopeptidase activity"/>
    <property type="evidence" value="ECO:0007669"/>
    <property type="project" value="UniProtKB-UniRule"/>
</dbReference>
<dbReference type="GO" id="GO:0006515">
    <property type="term" value="P:protein quality control for misfolded or incompletely synthesized proteins"/>
    <property type="evidence" value="ECO:0007669"/>
    <property type="project" value="TreeGrafter"/>
</dbReference>
<dbReference type="CDD" id="cd07017">
    <property type="entry name" value="S14_ClpP_2"/>
    <property type="match status" value="1"/>
</dbReference>
<dbReference type="FunFam" id="3.90.226.10:FF:000014">
    <property type="entry name" value="ATP-dependent Clp protease proteolytic subunit"/>
    <property type="match status" value="1"/>
</dbReference>
<dbReference type="Gene3D" id="3.90.226.10">
    <property type="entry name" value="2-enoyl-CoA Hydratase, Chain A, domain 1"/>
    <property type="match status" value="1"/>
</dbReference>
<dbReference type="HAMAP" id="MF_00444">
    <property type="entry name" value="ClpP"/>
    <property type="match status" value="1"/>
</dbReference>
<dbReference type="InterPro" id="IPR001907">
    <property type="entry name" value="ClpP"/>
</dbReference>
<dbReference type="InterPro" id="IPR029045">
    <property type="entry name" value="ClpP/crotonase-like_dom_sf"/>
</dbReference>
<dbReference type="InterPro" id="IPR023562">
    <property type="entry name" value="ClpP/TepA"/>
</dbReference>
<dbReference type="InterPro" id="IPR033135">
    <property type="entry name" value="ClpP_His_AS"/>
</dbReference>
<dbReference type="InterPro" id="IPR018215">
    <property type="entry name" value="ClpP_Ser_AS"/>
</dbReference>
<dbReference type="NCBIfam" id="NF001368">
    <property type="entry name" value="PRK00277.1"/>
    <property type="match status" value="1"/>
</dbReference>
<dbReference type="NCBIfam" id="NF009205">
    <property type="entry name" value="PRK12553.1"/>
    <property type="match status" value="1"/>
</dbReference>
<dbReference type="PANTHER" id="PTHR10381">
    <property type="entry name" value="ATP-DEPENDENT CLP PROTEASE PROTEOLYTIC SUBUNIT"/>
    <property type="match status" value="1"/>
</dbReference>
<dbReference type="PANTHER" id="PTHR10381:SF70">
    <property type="entry name" value="ATP-DEPENDENT CLP PROTEASE PROTEOLYTIC SUBUNIT"/>
    <property type="match status" value="1"/>
</dbReference>
<dbReference type="Pfam" id="PF00574">
    <property type="entry name" value="CLP_protease"/>
    <property type="match status" value="1"/>
</dbReference>
<dbReference type="PRINTS" id="PR00127">
    <property type="entry name" value="CLPPROTEASEP"/>
</dbReference>
<dbReference type="SUPFAM" id="SSF52096">
    <property type="entry name" value="ClpP/crotonase"/>
    <property type="match status" value="1"/>
</dbReference>
<dbReference type="PROSITE" id="PS00382">
    <property type="entry name" value="CLP_PROTEASE_HIS"/>
    <property type="match status" value="1"/>
</dbReference>
<dbReference type="PROSITE" id="PS00381">
    <property type="entry name" value="CLP_PROTEASE_SER"/>
    <property type="match status" value="1"/>
</dbReference>
<reference key="1">
    <citation type="journal article" date="2006" name="Proc. Natl. Acad. Sci. U.S.A.">
        <title>Molecular genetic anatomy of inter- and intraserotype variation in the human bacterial pathogen group A Streptococcus.</title>
        <authorList>
            <person name="Beres S.B."/>
            <person name="Richter E.W."/>
            <person name="Nagiec M.J."/>
            <person name="Sumby P."/>
            <person name="Porcella S.F."/>
            <person name="DeLeo F.R."/>
            <person name="Musser J.M."/>
        </authorList>
    </citation>
    <scope>NUCLEOTIDE SEQUENCE [LARGE SCALE GENOMIC DNA]</scope>
    <source>
        <strain>MGAS10270</strain>
    </source>
</reference>
<accession>Q1JID4</accession>
<sequence>MIPVVIEQTSRGERSYDIYSRLLKDRIIMLTGPVEDNMANSVIAQLLFLDAQDNTKDIYLYVNTPGGSVSAGLAIVDTMNFIKADVQTIVMGMAASMGTVIASSGTKGKRFMLPNAEYMIHQPMGGTGGGTQQTDMAIAAEHLLKTRHRLEKILAQNAGKTIKQIHKDAERDYWMSAEETLAYGFIDEIMENNELK</sequence>
<gene>
    <name evidence="1" type="primary">clpP</name>
    <name type="ordered locus">MGAS10270_Spy0324</name>
</gene>
<keyword id="KW-0963">Cytoplasm</keyword>
<keyword id="KW-0378">Hydrolase</keyword>
<keyword id="KW-0645">Protease</keyword>
<keyword id="KW-0720">Serine protease</keyword>
<comment type="function">
    <text evidence="1">Cleaves peptides in various proteins in a process that requires ATP hydrolysis. Has a chymotrypsin-like activity. Plays a major role in the degradation of misfolded proteins.</text>
</comment>
<comment type="catalytic activity">
    <reaction evidence="1">
        <text>Hydrolysis of proteins to small peptides in the presence of ATP and magnesium. alpha-casein is the usual test substrate. In the absence of ATP, only oligopeptides shorter than five residues are hydrolyzed (such as succinyl-Leu-Tyr-|-NHMec, and Leu-Tyr-Leu-|-Tyr-Trp, in which cleavage of the -Tyr-|-Leu- and -Tyr-|-Trp bonds also occurs).</text>
        <dbReference type="EC" id="3.4.21.92"/>
    </reaction>
</comment>
<comment type="subunit">
    <text evidence="1">Fourteen ClpP subunits assemble into 2 heptameric rings which stack back to back to give a disk-like structure with a central cavity, resembling the structure of eukaryotic proteasomes.</text>
</comment>
<comment type="subcellular location">
    <subcellularLocation>
        <location evidence="1">Cytoplasm</location>
    </subcellularLocation>
</comment>
<comment type="similarity">
    <text evidence="1">Belongs to the peptidase S14 family.</text>
</comment>
<organism>
    <name type="scientific">Streptococcus pyogenes serotype M2 (strain MGAS10270)</name>
    <dbReference type="NCBI Taxonomy" id="370552"/>
    <lineage>
        <taxon>Bacteria</taxon>
        <taxon>Bacillati</taxon>
        <taxon>Bacillota</taxon>
        <taxon>Bacilli</taxon>
        <taxon>Lactobacillales</taxon>
        <taxon>Streptococcaceae</taxon>
        <taxon>Streptococcus</taxon>
    </lineage>
</organism>